<keyword id="KW-0378">Hydrolase</keyword>
<keyword id="KW-0540">Nuclease</keyword>
<keyword id="KW-1185">Reference proteome</keyword>
<keyword id="KW-0964">Secreted</keyword>
<keyword id="KW-0800">Toxin</keyword>
<reference key="1">
    <citation type="journal article" date="2003" name="Nature">
        <title>Genome sequence of Bacillus cereus and comparative analysis with Bacillus anthracis.</title>
        <authorList>
            <person name="Ivanova N."/>
            <person name="Sorokin A."/>
            <person name="Anderson I."/>
            <person name="Galleron N."/>
            <person name="Candelon B."/>
            <person name="Kapatral V."/>
            <person name="Bhattacharyya A."/>
            <person name="Reznik G."/>
            <person name="Mikhailova N."/>
            <person name="Lapidus A."/>
            <person name="Chu L."/>
            <person name="Mazur M."/>
            <person name="Goltsman E."/>
            <person name="Larsen N."/>
            <person name="D'Souza M."/>
            <person name="Walunas T."/>
            <person name="Grechkin Y."/>
            <person name="Pusch G."/>
            <person name="Haselkorn R."/>
            <person name="Fonstein M."/>
            <person name="Ehrlich S.D."/>
            <person name="Overbeek R."/>
            <person name="Kyrpides N.C."/>
        </authorList>
    </citation>
    <scope>NUCLEOTIDE SEQUENCE [LARGE SCALE GENOMIC DNA]</scope>
    <source>
        <strain>ATCC 14579 / DSM 31 / CCUG 7414 / JCM 2152 / NBRC 15305 / NCIMB 9373 / NCTC 2599 / NRRL B-3711</strain>
    </source>
</reference>
<reference key="2">
    <citation type="journal article" date="2012" name="FEBS Lett.">
        <title>A novel family of toxin/antitoxin proteins in Bacillus species.</title>
        <authorList>
            <person name="Holberger L.E."/>
            <person name="Garza-Sanchez F."/>
            <person name="Lamoureux J."/>
            <person name="Low D.A."/>
            <person name="Hayes C.S."/>
        </authorList>
    </citation>
    <scope>FUNCTION AS AN RNASE</scope>
    <scope>PROBABLE FUNCTION AS A TOXIN</scope>
    <scope>EXPRESSION IN E.COLI</scope>
    <source>
        <strain>ATCC 14579 / DSM 31 / CCUG 7414 / JCM 2152 / NBRC 15305 / NCIMB 9373 / NCTC 2599 / NRRL B-3711</strain>
    </source>
</reference>
<reference key="3">
    <citation type="journal article" date="2018" name="Mol. Microbiol.">
        <title>Functional plasticity of antibacterial EndoU toxins.</title>
        <authorList>
            <person name="Michalska K."/>
            <person name="Quan Nhan D."/>
            <person name="Willett J.L.E."/>
            <person name="Stols L.M."/>
            <person name="Eschenfeldt W.H."/>
            <person name="Jones A.M."/>
            <person name="Nguyen J.Y."/>
            <person name="Koskiniemi S."/>
            <person name="Low D.A."/>
            <person name="Goulding C.W."/>
            <person name="Joachimiak A."/>
            <person name="Hayes C.S."/>
        </authorList>
    </citation>
    <scope>FUNCTION</scope>
    <source>
        <strain>ATCC 14579 / DSM 31 / CCUG 7414 / JCM 2152 / NBRC 15305 / NCIMB 9373 / NCTC 2599 / NRRL B-3711</strain>
    </source>
</reference>
<organism>
    <name type="scientific">Bacillus cereus (strain ATCC 14579 / DSM 31 / CCUG 7414 / JCM 2152 / NBRC 15305 / NCIMB 9373 / NCTC 2599 / NRRL B-3711)</name>
    <dbReference type="NCBI Taxonomy" id="226900"/>
    <lineage>
        <taxon>Bacteria</taxon>
        <taxon>Bacillati</taxon>
        <taxon>Bacillota</taxon>
        <taxon>Bacilli</taxon>
        <taxon>Bacillales</taxon>
        <taxon>Bacillaceae</taxon>
        <taxon>Bacillus</taxon>
        <taxon>Bacillus cereus group</taxon>
    </lineage>
</organism>
<accession>Q813X6</accession>
<proteinExistence type="evidence at protein level"/>
<gene>
    <name type="ordered locus">BC_0920</name>
</gene>
<dbReference type="EC" id="3.1.-.-"/>
<dbReference type="EMBL" id="AE016877">
    <property type="protein sequence ID" value="AAP07907.1"/>
    <property type="molecule type" value="Genomic_DNA"/>
</dbReference>
<dbReference type="RefSeq" id="NP_830706.1">
    <property type="nucleotide sequence ID" value="NC_004722.1"/>
</dbReference>
<dbReference type="RefSeq" id="WP_000056051.1">
    <property type="nucleotide sequence ID" value="NC_004722.1"/>
</dbReference>
<dbReference type="STRING" id="226900.BC_0920"/>
<dbReference type="KEGG" id="bce:BC0920"/>
<dbReference type="PATRIC" id="fig|226900.8.peg.868"/>
<dbReference type="HOGENOM" id="CLU_031023_2_0_9"/>
<dbReference type="OrthoDB" id="2666568at2"/>
<dbReference type="Proteomes" id="UP000001417">
    <property type="component" value="Chromosome"/>
</dbReference>
<dbReference type="GO" id="GO:0005576">
    <property type="term" value="C:extracellular region"/>
    <property type="evidence" value="ECO:0007669"/>
    <property type="project" value="UniProtKB-SubCell"/>
</dbReference>
<dbReference type="GO" id="GO:0004519">
    <property type="term" value="F:endonuclease activity"/>
    <property type="evidence" value="ECO:0007669"/>
    <property type="project" value="InterPro"/>
</dbReference>
<dbReference type="GO" id="GO:0090729">
    <property type="term" value="F:toxin activity"/>
    <property type="evidence" value="ECO:0007669"/>
    <property type="project" value="UniProtKB-KW"/>
</dbReference>
<dbReference type="InterPro" id="IPR051768">
    <property type="entry name" value="Bact_secretion_toxin"/>
</dbReference>
<dbReference type="InterPro" id="IPR029501">
    <property type="entry name" value="EndoU_bac"/>
</dbReference>
<dbReference type="InterPro" id="IPR006829">
    <property type="entry name" value="LXG_dom"/>
</dbReference>
<dbReference type="PANTHER" id="PTHR34976">
    <property type="entry name" value="RIBONUCLEASE YQCG-RELATED"/>
    <property type="match status" value="1"/>
</dbReference>
<dbReference type="PANTHER" id="PTHR34976:SF1">
    <property type="entry name" value="TOXIN BC_0920"/>
    <property type="match status" value="1"/>
</dbReference>
<dbReference type="Pfam" id="PF14436">
    <property type="entry name" value="EndoU_bacteria"/>
    <property type="match status" value="1"/>
</dbReference>
<dbReference type="Pfam" id="PF04740">
    <property type="entry name" value="LXG"/>
    <property type="match status" value="1"/>
</dbReference>
<dbReference type="PROSITE" id="PS51756">
    <property type="entry name" value="LXG"/>
    <property type="match status" value="1"/>
</dbReference>
<sequence>MSLNMYLGEVQGQTQSMNAVCNATIQGMEQVIQSIDAFAIDTVLQGQTYSSAKSFFVQTFRPLAQGIIYLCEELIRQNDAFPSQFQSQVASTDVIEQEILEQIREIDRMKASMEAISQAMPIPGMDAMANLFTVMRKKLQEKLDHLYQFNQTSSNNYSTALQLAASIAAGLAEVQSGKGFSPASGTFSTQGLNMEWTTSIQAITEERARQAANSIEEGEMCGKLPEKSTGEKIWDGIVEGTGQAVSDTIDGIKALGDWETWENMGNAALHPIDTLSTMYNTLSDSFINDVINGDAESRAKWGSYALTQVGLGLIGDKGLSKASKLGQAGKVTKLAKNKIPQAVSHITSNLQMGDRFAFAGGNSLRFRFDTPDFKKAEEKLSTYQFARGESNYGGSNFVNENHRSSLSNREIISNLQHTEKFRPNTLKHILEGEINWRGDAMGYHTEVLENTPGKIISGTEEILNDQGIYKARVEVNGTPKTGNRGFSTFFPKDWSPQKIVDNINEAYNNRTYEFGNTYSGIGSEGIRISMYIDGNGKIISAFPAE</sequence>
<evidence type="ECO:0000255" key="1">
    <source>
        <dbReference type="PROSITE-ProRule" id="PRU01092"/>
    </source>
</evidence>
<evidence type="ECO:0000269" key="2">
    <source>
    </source>
</evidence>
<evidence type="ECO:0000269" key="3">
    <source>
    </source>
</evidence>
<evidence type="ECO:0000303" key="4">
    <source>
    </source>
</evidence>
<evidence type="ECO:0000305" key="5"/>
<comment type="function">
    <text evidence="2 3">Toxic component of an LXG toxin-immunity module. The C-terminus (residues 322-545) has RNase activity in E.coli which is neutralized by cognate immunity protein BC_0921, but not by immunity proteins specific to other toxins with the LXG domain (PubMed:22200572). Degrades 5S rRNA and several tRNAs in vitro; cleavage is endonucleolytic within the anticodon loop for tRNA(GAU-Ile) and tRNA(UUC-Glu) but total for 5S rRNA and at least one other tRNA. RNase activity is suppressed by cognate immunity protein BC_0921 (PubMed:29923643).</text>
</comment>
<comment type="subunit">
    <text evidence="5">Probably interacts with cognate immunity protein BC_0921. The interaction inhibits the toxic activity of BC_0921 (Probable).</text>
</comment>
<comment type="subcellular location">
    <subcellularLocation>
        <location evidence="5">Secreted</location>
    </subcellularLocation>
    <text evidence="5">Delivery to target cells requires a type VII secretion system (T7SS).</text>
</comment>
<comment type="similarity">
    <text evidence="4">In the N-terminal section; belongs to the LXG family.</text>
</comment>
<comment type="similarity">
    <text evidence="5">In the C-terminal section; belongs to the bacterial EndoU family.</text>
</comment>
<protein>
    <recommendedName>
        <fullName evidence="4">Toxin BC_0920</fullName>
    </recommendedName>
    <alternativeName>
        <fullName>Ribonuclease BC_0920</fullName>
        <shortName evidence="4">RNase BC_0920</shortName>
        <ecNumber>3.1.-.-</ecNumber>
    </alternativeName>
</protein>
<feature type="chain" id="PRO_0000424068" description="Toxin BC_0920">
    <location>
        <begin position="1"/>
        <end position="545"/>
    </location>
</feature>
<feature type="domain" description="LXG" evidence="1">
    <location>
        <begin position="1"/>
        <end position="217"/>
    </location>
</feature>
<name>TOX1_BACCR</name>